<protein>
    <recommendedName>
        <fullName>Alpha-amylase isozyme 3D</fullName>
        <ecNumber evidence="2">3.2.1.1</ecNumber>
    </recommendedName>
    <alternativeName>
        <fullName>1,4-alpha-D-glucan glucanohydrolase</fullName>
    </alternativeName>
</protein>
<organism>
    <name type="scientific">Oryza sativa subsp. japonica</name>
    <name type="common">Rice</name>
    <dbReference type="NCBI Taxonomy" id="39947"/>
    <lineage>
        <taxon>Eukaryota</taxon>
        <taxon>Viridiplantae</taxon>
        <taxon>Streptophyta</taxon>
        <taxon>Embryophyta</taxon>
        <taxon>Tracheophyta</taxon>
        <taxon>Spermatophyta</taxon>
        <taxon>Magnoliopsida</taxon>
        <taxon>Liliopsida</taxon>
        <taxon>Poales</taxon>
        <taxon>Poaceae</taxon>
        <taxon>BOP clade</taxon>
        <taxon>Oryzoideae</taxon>
        <taxon>Oryzeae</taxon>
        <taxon>Oryzinae</taxon>
        <taxon>Oryza</taxon>
        <taxon>Oryza sativa</taxon>
    </lineage>
</organism>
<feature type="signal peptide" evidence="4">
    <location>
        <begin position="1"/>
        <end position="25"/>
    </location>
</feature>
<feature type="chain" id="PRO_0000001415" description="Alpha-amylase isozyme 3D">
    <location>
        <begin position="26"/>
        <end position="436"/>
    </location>
</feature>
<feature type="active site" description="Nucleophile" evidence="2">
    <location>
        <position position="204"/>
    </location>
</feature>
<feature type="active site" description="Proton donor" evidence="2">
    <location>
        <position position="229"/>
    </location>
</feature>
<feature type="binding site" evidence="2">
    <location>
        <begin position="69"/>
        <end position="71"/>
    </location>
    <ligand>
        <name>substrate</name>
    </ligand>
</feature>
<feature type="binding site" evidence="2">
    <location>
        <begin position="76"/>
        <end position="77"/>
    </location>
    <ligand>
        <name>substrate</name>
    </ligand>
</feature>
<feature type="binding site" evidence="2">
    <location>
        <position position="116"/>
    </location>
    <ligand>
        <name>Ca(2+)</name>
        <dbReference type="ChEBI" id="CHEBI:29108"/>
        <label>1</label>
    </ligand>
</feature>
<feature type="binding site" evidence="2">
    <location>
        <position position="133"/>
    </location>
    <ligand>
        <name>Ca(2+)</name>
        <dbReference type="ChEBI" id="CHEBI:29108"/>
        <label>2</label>
    </ligand>
</feature>
<feature type="binding site" evidence="2">
    <location>
        <position position="136"/>
    </location>
    <ligand>
        <name>Ca(2+)</name>
        <dbReference type="ChEBI" id="CHEBI:29108"/>
        <label>2</label>
    </ligand>
</feature>
<feature type="binding site" evidence="2">
    <location>
        <position position="138"/>
    </location>
    <ligand>
        <name>Ca(2+)</name>
        <dbReference type="ChEBI" id="CHEBI:29108"/>
        <label>2</label>
    </ligand>
</feature>
<feature type="binding site" evidence="2">
    <location>
        <position position="142"/>
    </location>
    <ligand>
        <name>Ca(2+)</name>
        <dbReference type="ChEBI" id="CHEBI:29108"/>
        <label>2</label>
    </ligand>
</feature>
<feature type="binding site" evidence="2">
    <location>
        <position position="152"/>
    </location>
    <ligand>
        <name>Ca(2+)</name>
        <dbReference type="ChEBI" id="CHEBI:29108"/>
        <label>3</label>
    </ligand>
</feature>
<feature type="binding site" evidence="2">
    <location>
        <position position="163"/>
    </location>
    <ligand>
        <name>Ca(2+)</name>
        <dbReference type="ChEBI" id="CHEBI:29108"/>
        <label>1</label>
    </ligand>
</feature>
<feature type="binding site" evidence="2">
    <location>
        <position position="168"/>
    </location>
    <ligand>
        <name>Ca(2+)</name>
        <dbReference type="ChEBI" id="CHEBI:29108"/>
        <label>3</label>
    </ligand>
</feature>
<feature type="binding site" evidence="2">
    <location>
        <position position="171"/>
    </location>
    <ligand>
        <name>Ca(2+)</name>
        <dbReference type="ChEBI" id="CHEBI:29108"/>
        <label>3</label>
    </ligand>
</feature>
<feature type="binding site" evidence="2">
    <location>
        <position position="173"/>
    </location>
    <ligand>
        <name>Ca(2+)</name>
        <dbReference type="ChEBI" id="CHEBI:29108"/>
        <label>1</label>
    </ligand>
</feature>
<feature type="binding site" evidence="2">
    <location>
        <position position="173"/>
    </location>
    <ligand>
        <name>Ca(2+)</name>
        <dbReference type="ChEBI" id="CHEBI:29108"/>
        <label>3</label>
    </ligand>
</feature>
<feature type="binding site" evidence="2">
    <location>
        <begin position="202"/>
        <end position="207"/>
    </location>
    <ligand>
        <name>substrate</name>
    </ligand>
</feature>
<feature type="binding site" evidence="2">
    <location>
        <position position="208"/>
    </location>
    <ligand>
        <name>Ca(2+)</name>
        <dbReference type="ChEBI" id="CHEBI:29108"/>
        <label>1</label>
    </ligand>
</feature>
<feature type="binding site" evidence="2">
    <location>
        <position position="231"/>
    </location>
    <ligand>
        <name>substrate</name>
    </ligand>
</feature>
<feature type="binding site" evidence="3">
    <location>
        <position position="233"/>
    </location>
    <ligand>
        <name>substrate</name>
    </ligand>
</feature>
<feature type="binding site" evidence="2">
    <location>
        <position position="251"/>
    </location>
    <ligand>
        <name>substrate</name>
    </ligand>
</feature>
<feature type="binding site" evidence="2">
    <location>
        <position position="292"/>
    </location>
    <ligand>
        <name>substrate</name>
    </ligand>
</feature>
<feature type="binding site" evidence="2">
    <location>
        <begin position="298"/>
        <end position="300"/>
    </location>
    <ligand>
        <name>substrate</name>
    </ligand>
</feature>
<feature type="binding site" evidence="2">
    <location>
        <position position="311"/>
    </location>
    <ligand>
        <name>substrate</name>
    </ligand>
</feature>
<feature type="binding site" evidence="2">
    <location>
        <position position="317"/>
    </location>
    <ligand>
        <name>substrate</name>
    </ligand>
</feature>
<feature type="binding site" evidence="2">
    <location>
        <position position="396"/>
    </location>
    <ligand>
        <name>substrate</name>
    </ligand>
</feature>
<feature type="binding site" evidence="2">
    <location>
        <begin position="401"/>
        <end position="403"/>
    </location>
    <ligand>
        <name>substrate</name>
    </ligand>
</feature>
<feature type="binding site" evidence="2">
    <location>
        <begin position="413"/>
        <end position="419"/>
    </location>
    <ligand>
        <name>substrate</name>
    </ligand>
</feature>
<feature type="binding site" evidence="2">
    <location>
        <position position="423"/>
    </location>
    <ligand>
        <name>substrate</name>
    </ligand>
</feature>
<feature type="site" description="Transition state stabilizer" evidence="2">
    <location>
        <position position="312"/>
    </location>
</feature>
<feature type="sequence conflict" description="In Ref. 2; AAA33886." evidence="5" ref="2">
    <original>PQ</original>
    <variation>R</variation>
    <location>
        <begin position="73"/>
        <end position="74"/>
    </location>
</feature>
<feature type="sequence conflict" description="In Ref. 2; AAA33886." evidence="5" ref="2">
    <original>P</original>
    <variation>R</variation>
    <location>
        <position position="137"/>
    </location>
</feature>
<feature type="sequence conflict" description="In Ref. 1; AAA33895 and 2; AAA33886." evidence="5" ref="1 2">
    <location>
        <position position="138"/>
    </location>
</feature>
<feature type="sequence conflict" description="In Ref. 1; AAA33895 and 2; AAA33886." evidence="5" ref="1 2">
    <original>A</original>
    <variation>P</variation>
    <location>
        <position position="294"/>
    </location>
</feature>
<dbReference type="EC" id="3.2.1.1" evidence="2"/>
<dbReference type="EMBL" id="M59351">
    <property type="protein sequence ID" value="AAA33895.1"/>
    <property type="molecule type" value="Genomic_DNA"/>
</dbReference>
<dbReference type="EMBL" id="M24287">
    <property type="protein sequence ID" value="AAA33886.1"/>
    <property type="molecule type" value="mRNA"/>
</dbReference>
<dbReference type="EMBL" id="AP004399">
    <property type="protein sequence ID" value="BAD09335.1"/>
    <property type="molecule type" value="Genomic_DNA"/>
</dbReference>
<dbReference type="EMBL" id="AP004457">
    <property type="protein sequence ID" value="BAD09375.1"/>
    <property type="molecule type" value="Genomic_DNA"/>
</dbReference>
<dbReference type="EMBL" id="AP014964">
    <property type="protein sequence ID" value="BAT05862.1"/>
    <property type="molecule type" value="Genomic_DNA"/>
</dbReference>
<dbReference type="PIR" id="S12625">
    <property type="entry name" value="S12625"/>
</dbReference>
<dbReference type="SMR" id="P27933"/>
<dbReference type="FunCoup" id="P27933">
    <property type="interactions" value="259"/>
</dbReference>
<dbReference type="STRING" id="39947.P27933"/>
<dbReference type="CAZy" id="GH13">
    <property type="family name" value="Glycoside Hydrolase Family 13"/>
</dbReference>
<dbReference type="PaxDb" id="39947-P27933"/>
<dbReference type="EnsemblPlants" id="Os08t0473900-02">
    <property type="protein sequence ID" value="Os08t0473900-02"/>
    <property type="gene ID" value="Os08g0473900"/>
</dbReference>
<dbReference type="Gramene" id="Os08t0473900-02">
    <property type="protein sequence ID" value="Os08t0473900-02"/>
    <property type="gene ID" value="Os08g0473900"/>
</dbReference>
<dbReference type="eggNOG" id="KOG0471">
    <property type="taxonomic scope" value="Eukaryota"/>
</dbReference>
<dbReference type="InParanoid" id="P27933"/>
<dbReference type="Proteomes" id="UP000000763">
    <property type="component" value="Chromosome 8"/>
</dbReference>
<dbReference type="Proteomes" id="UP000059680">
    <property type="component" value="Chromosome 8"/>
</dbReference>
<dbReference type="ExpressionAtlas" id="P27933">
    <property type="expression patterns" value="baseline and differential"/>
</dbReference>
<dbReference type="GO" id="GO:0004556">
    <property type="term" value="F:alpha-amylase activity"/>
    <property type="evidence" value="ECO:0000318"/>
    <property type="project" value="GO_Central"/>
</dbReference>
<dbReference type="GO" id="GO:0005509">
    <property type="term" value="F:calcium ion binding"/>
    <property type="evidence" value="ECO:0007669"/>
    <property type="project" value="InterPro"/>
</dbReference>
<dbReference type="GO" id="GO:0005983">
    <property type="term" value="P:starch catabolic process"/>
    <property type="evidence" value="ECO:0000270"/>
    <property type="project" value="Gramene"/>
</dbReference>
<dbReference type="GO" id="GO:0005987">
    <property type="term" value="P:sucrose catabolic process"/>
    <property type="evidence" value="ECO:0000270"/>
    <property type="project" value="Gramene"/>
</dbReference>
<dbReference type="CDD" id="cd11314">
    <property type="entry name" value="AmyAc_arch_bac_plant_AmyA"/>
    <property type="match status" value="1"/>
</dbReference>
<dbReference type="FunFam" id="2.60.40.1180:FF:000021">
    <property type="entry name" value="Alpha-amylase"/>
    <property type="match status" value="1"/>
</dbReference>
<dbReference type="Gene3D" id="3.20.20.80">
    <property type="entry name" value="Glycosidases"/>
    <property type="match status" value="1"/>
</dbReference>
<dbReference type="Gene3D" id="2.60.40.1180">
    <property type="entry name" value="Golgi alpha-mannosidase II"/>
    <property type="match status" value="1"/>
</dbReference>
<dbReference type="InterPro" id="IPR012850">
    <property type="entry name" value="A-amylase_bs_C"/>
</dbReference>
<dbReference type="InterPro" id="IPR013775">
    <property type="entry name" value="A-amylase_pln"/>
</dbReference>
<dbReference type="InterPro" id="IPR006046">
    <property type="entry name" value="Alpha_amylase"/>
</dbReference>
<dbReference type="InterPro" id="IPR006047">
    <property type="entry name" value="Glyco_hydro_13_cat_dom"/>
</dbReference>
<dbReference type="InterPro" id="IPR013780">
    <property type="entry name" value="Glyco_hydro_b"/>
</dbReference>
<dbReference type="InterPro" id="IPR017853">
    <property type="entry name" value="Glycoside_hydrolase_SF"/>
</dbReference>
<dbReference type="PANTHER" id="PTHR43447">
    <property type="entry name" value="ALPHA-AMYLASE"/>
    <property type="match status" value="1"/>
</dbReference>
<dbReference type="Pfam" id="PF07821">
    <property type="entry name" value="Alpha-amyl_C2"/>
    <property type="match status" value="1"/>
</dbReference>
<dbReference type="Pfam" id="PF00128">
    <property type="entry name" value="Alpha-amylase"/>
    <property type="match status" value="1"/>
</dbReference>
<dbReference type="PIRSF" id="PIRSF001028">
    <property type="entry name" value="Alph-amls_plant"/>
    <property type="match status" value="1"/>
</dbReference>
<dbReference type="PRINTS" id="PR00110">
    <property type="entry name" value="ALPHAAMYLASE"/>
</dbReference>
<dbReference type="SMART" id="SM00642">
    <property type="entry name" value="Aamy"/>
    <property type="match status" value="1"/>
</dbReference>
<dbReference type="SMART" id="SM00810">
    <property type="entry name" value="Alpha-amyl_C2"/>
    <property type="match status" value="1"/>
</dbReference>
<dbReference type="SUPFAM" id="SSF51445">
    <property type="entry name" value="(Trans)glycosidases"/>
    <property type="match status" value="1"/>
</dbReference>
<dbReference type="SUPFAM" id="SSF51011">
    <property type="entry name" value="Glycosyl hydrolase domain"/>
    <property type="match status" value="1"/>
</dbReference>
<evidence type="ECO:0000250" key="1"/>
<evidence type="ECO:0000250" key="2">
    <source>
        <dbReference type="UniProtKB" id="P00693"/>
    </source>
</evidence>
<evidence type="ECO:0000250" key="3">
    <source>
        <dbReference type="UniProtKB" id="P04063"/>
    </source>
</evidence>
<evidence type="ECO:0000255" key="4"/>
<evidence type="ECO:0000305" key="5"/>
<reference key="1">
    <citation type="journal article" date="1990" name="Nucleic Acids Res.">
        <title>Structural organization and differential expression of rice alpha-amylase genes.</title>
        <authorList>
            <person name="Huang N."/>
            <person name="Koizumi N."/>
            <person name="Reinl S.J."/>
            <person name="Rodriguez R.L."/>
        </authorList>
    </citation>
    <scope>NUCLEOTIDE SEQUENCE [GENOMIC DNA]</scope>
    <source>
        <strain>cv. M202</strain>
        <tissue>Etiolated leaf</tissue>
    </source>
</reference>
<reference key="2">
    <citation type="journal article" date="1990" name="Mol. Gen. Genet.">
        <title>The alpha-amylase genes in Oryza sativa: characterization of cDNA clones and mRNA expression during seed germination.</title>
        <authorList>
            <person name="O'Neill S.D."/>
            <person name="Kumagai M.H."/>
            <person name="Majumdar A."/>
            <person name="Huang N."/>
            <person name="Sutliff T.D."/>
            <person name="Rodriguez R.L."/>
        </authorList>
    </citation>
    <scope>NUCLEOTIDE SEQUENCE [MRNA]</scope>
</reference>
<reference key="3">
    <citation type="journal article" date="2005" name="Nature">
        <title>The map-based sequence of the rice genome.</title>
        <authorList>
            <consortium name="International rice genome sequencing project (IRGSP)"/>
        </authorList>
    </citation>
    <scope>NUCLEOTIDE SEQUENCE [LARGE SCALE GENOMIC DNA]</scope>
    <source>
        <strain>cv. Nipponbare</strain>
    </source>
</reference>
<reference key="4">
    <citation type="journal article" date="2013" name="Rice">
        <title>Improvement of the Oryza sativa Nipponbare reference genome using next generation sequence and optical map data.</title>
        <authorList>
            <person name="Kawahara Y."/>
            <person name="de la Bastide M."/>
            <person name="Hamilton J.P."/>
            <person name="Kanamori H."/>
            <person name="McCombie W.R."/>
            <person name="Ouyang S."/>
            <person name="Schwartz D.C."/>
            <person name="Tanaka T."/>
            <person name="Wu J."/>
            <person name="Zhou S."/>
            <person name="Childs K.L."/>
            <person name="Davidson R.M."/>
            <person name="Lin H."/>
            <person name="Quesada-Ocampo L."/>
            <person name="Vaillancourt B."/>
            <person name="Sakai H."/>
            <person name="Lee S.S."/>
            <person name="Kim J."/>
            <person name="Numa H."/>
            <person name="Itoh T."/>
            <person name="Buell C.R."/>
            <person name="Matsumoto T."/>
        </authorList>
    </citation>
    <scope>GENOME REANNOTATION</scope>
    <source>
        <strain>cv. Nipponbare</strain>
    </source>
</reference>
<comment type="function">
    <text>Important for breakdown of endosperm starch during germination.</text>
</comment>
<comment type="catalytic activity">
    <reaction evidence="2">
        <text>Endohydrolysis of (1-&gt;4)-alpha-D-glucosidic linkages in polysaccharides containing three or more (1-&gt;4)-alpha-linked D-glucose units.</text>
        <dbReference type="EC" id="3.2.1.1"/>
    </reaction>
</comment>
<comment type="cofactor">
    <cofactor evidence="2">
        <name>Ca(2+)</name>
        <dbReference type="ChEBI" id="CHEBI:29108"/>
    </cofactor>
    <text evidence="2">Binds 3 Ca(2+) ions per subunit.</text>
</comment>
<comment type="subunit">
    <text>Monomer.</text>
</comment>
<comment type="tissue specificity">
    <text>Is expressed in all tissues, except in immature seeds. Is the most abundant alpha-amylase isozyme in callus.</text>
</comment>
<comment type="developmental stage">
    <text>Expressed at a high level during germination in the aleurones cells under the control of the plant hormone gibberellic acid and in the developing grains at a low level.</text>
</comment>
<comment type="miscellaneous">
    <text evidence="1">Binds starch not only at the active site, but also via accessory binding sites on the protein surface that are important for efficient binding to starch granules and thereby increase enzyme activity.</text>
</comment>
<comment type="similarity">
    <text evidence="5">Belongs to the glycosyl hydrolase 13 family.</text>
</comment>
<gene>
    <name type="primary">AMY1.3</name>
    <name type="synonym">AMY3D</name>
    <name type="ordered locus">Os08g0473900</name>
    <name type="ordered locus">LOC_Os08g36910</name>
    <name type="ORF">P0013B04.36-1</name>
    <name type="ORF">P0451G12.5-1</name>
</gene>
<sequence>MKNTSSLCLLLLVVLCSLTCNSGQAQVLFQGFNWESWKQQGGWYNMLKGQVDDIAKAGVTHVWLPPPSHSVAPQGYMPGRLYDLDASKYGTAAELKSLIAAFHGKGVQCVADVVINHRCAEKKDARGVYCVFEGGTPDDRLDWGPGMICSDDTQYSDGTGHRDTGEGFGAAPDIDHLNPRVQRELTDWLNWLKSDVGFDGWRLDFAKGYSTDIAKMYVESCKPGFVVAEIWNSLSYNGDGKPAANQDQGRQELVNWVNAVGGPAMTFDFTTKGLLQAGVQGELWRLRDGNGKAAGMIGWLPEKAVTFVDNHDTGSTQKLWPFPSDKVMQGYAYILTHPGVPCIFYDHMFDWNLKQEITALAAIRERNGINAGSKLRIVVADADAYVAVVDEKVMVKIGTRYDVGNAVPSDFHQTVHGKDYSVWEKGSLRVPAGRHL</sequence>
<name>AMY3D_ORYSJ</name>
<keyword id="KW-0106">Calcium</keyword>
<keyword id="KW-0119">Carbohydrate metabolism</keyword>
<keyword id="KW-0326">Glycosidase</keyword>
<keyword id="KW-0378">Hydrolase</keyword>
<keyword id="KW-0479">Metal-binding</keyword>
<keyword id="KW-1185">Reference proteome</keyword>
<keyword id="KW-0732">Signal</keyword>
<accession>P27933</accession>
<accession>Q6ZDD5</accession>
<proteinExistence type="evidence at transcript level"/>